<reference key="1">
    <citation type="submission" date="2007-11" db="EMBL/GenBank/DDBJ databases">
        <title>Complete sequence of Delftia acidovorans DSM 14801 / SPH-1.</title>
        <authorList>
            <person name="Copeland A."/>
            <person name="Lucas S."/>
            <person name="Lapidus A."/>
            <person name="Barry K."/>
            <person name="Glavina del Rio T."/>
            <person name="Dalin E."/>
            <person name="Tice H."/>
            <person name="Pitluck S."/>
            <person name="Lowry S."/>
            <person name="Clum A."/>
            <person name="Schmutz J."/>
            <person name="Larimer F."/>
            <person name="Land M."/>
            <person name="Hauser L."/>
            <person name="Kyrpides N."/>
            <person name="Kim E."/>
            <person name="Schleheck D."/>
            <person name="Richardson P."/>
        </authorList>
    </citation>
    <scope>NUCLEOTIDE SEQUENCE [LARGE SCALE GENOMIC DNA]</scope>
    <source>
        <strain>DSM 14801 / SPH-1</strain>
    </source>
</reference>
<accession>A9BUC8</accession>
<proteinExistence type="inferred from homology"/>
<dbReference type="EMBL" id="CP000884">
    <property type="protein sequence ID" value="ABX33831.1"/>
    <property type="molecule type" value="Genomic_DNA"/>
</dbReference>
<dbReference type="RefSeq" id="WP_012203117.1">
    <property type="nucleotide sequence ID" value="NC_010002.1"/>
</dbReference>
<dbReference type="SMR" id="A9BUC8"/>
<dbReference type="STRING" id="398578.Daci_1186"/>
<dbReference type="GeneID" id="24113816"/>
<dbReference type="KEGG" id="dac:Daci_1186"/>
<dbReference type="eggNOG" id="COG0829">
    <property type="taxonomic scope" value="Bacteria"/>
</dbReference>
<dbReference type="HOGENOM" id="CLU_056339_0_0_4"/>
<dbReference type="Proteomes" id="UP000000784">
    <property type="component" value="Chromosome"/>
</dbReference>
<dbReference type="GO" id="GO:0005737">
    <property type="term" value="C:cytoplasm"/>
    <property type="evidence" value="ECO:0007669"/>
    <property type="project" value="UniProtKB-SubCell"/>
</dbReference>
<dbReference type="GO" id="GO:0016151">
    <property type="term" value="F:nickel cation binding"/>
    <property type="evidence" value="ECO:0007669"/>
    <property type="project" value="UniProtKB-UniRule"/>
</dbReference>
<dbReference type="HAMAP" id="MF_01384">
    <property type="entry name" value="UreD"/>
    <property type="match status" value="1"/>
</dbReference>
<dbReference type="InterPro" id="IPR002669">
    <property type="entry name" value="UreD"/>
</dbReference>
<dbReference type="PANTHER" id="PTHR33643">
    <property type="entry name" value="UREASE ACCESSORY PROTEIN D"/>
    <property type="match status" value="1"/>
</dbReference>
<dbReference type="PANTHER" id="PTHR33643:SF1">
    <property type="entry name" value="UREASE ACCESSORY PROTEIN D"/>
    <property type="match status" value="1"/>
</dbReference>
<dbReference type="Pfam" id="PF01774">
    <property type="entry name" value="UreD"/>
    <property type="match status" value="1"/>
</dbReference>
<evidence type="ECO:0000255" key="1">
    <source>
        <dbReference type="HAMAP-Rule" id="MF_01384"/>
    </source>
</evidence>
<feature type="chain" id="PRO_0000346561" description="Urease accessory protein UreD">
    <location>
        <begin position="1"/>
        <end position="305"/>
    </location>
</feature>
<gene>
    <name evidence="1" type="primary">ureD</name>
    <name type="ordered locus">Daci_1186</name>
</gene>
<name>URED_DELAS</name>
<protein>
    <recommendedName>
        <fullName evidence="1">Urease accessory protein UreD</fullName>
    </recommendedName>
</protein>
<comment type="function">
    <text evidence="1">Required for maturation of urease via the functional incorporation of the urease nickel metallocenter.</text>
</comment>
<comment type="subunit">
    <text evidence="1">UreD, UreF and UreG form a complex that acts as a GTP-hydrolysis-dependent molecular chaperone, activating the urease apoprotein by helping to assemble the nickel containing metallocenter of UreC. The UreE protein probably delivers the nickel.</text>
</comment>
<comment type="subcellular location">
    <subcellularLocation>
        <location evidence="1">Cytoplasm</location>
    </subcellularLocation>
</comment>
<comment type="similarity">
    <text evidence="1">Belongs to the UreD family.</text>
</comment>
<keyword id="KW-0143">Chaperone</keyword>
<keyword id="KW-0963">Cytoplasm</keyword>
<keyword id="KW-0533">Nickel</keyword>
<keyword id="KW-1185">Reference proteome</keyword>
<sequence length="305" mass="32257">MSAALPITAVPACASGWQAMLDLRFGHRAGQGSVLSHARHSGPLRVQKPLHPEGPGICHAVLLHPPGGVAGGDQLQIDVTVEPGAHALLTTPGATRWYKSQGRPAAQRVRLRVEEGAILEWLPQENMLFAGADATMALDLDLAPGARAIGWDAVVLGRYGAGEHWNHTGAAPTAAARLQLHNRLACGGRPLWLEQGELHAGHALLSSPVAWAGLPIQASLWAVAPEPLAAMEPLSEQLAASLPWSDEVRAGASLLAGQGGAPSVLLLRVLARRMEAARAVLHEGWRLLRPALLNQQARPPRLWAT</sequence>
<organism>
    <name type="scientific">Delftia acidovorans (strain DSM 14801 / SPH-1)</name>
    <dbReference type="NCBI Taxonomy" id="398578"/>
    <lineage>
        <taxon>Bacteria</taxon>
        <taxon>Pseudomonadati</taxon>
        <taxon>Pseudomonadota</taxon>
        <taxon>Betaproteobacteria</taxon>
        <taxon>Burkholderiales</taxon>
        <taxon>Comamonadaceae</taxon>
        <taxon>Delftia</taxon>
    </lineage>
</organism>